<sequence length="201" mass="22211">MELVMKDAKSALEVSETTFGREFNEALVHQVVVAYAAGARQGTRAQLTRSEVSGGGKKPWRQKGTGRARAGSIRSPIWRSGGVTFAAKPQDHSQKVNKKMYRGAIRSILSELVRQERLIVVEKFGIEAPKTKELIAKLKEMELTDVLIVTAEVDENLFLAARNLYKVDVRDVAGIDPVSLIAFDKVLMTAEAVKQIEEMLA</sequence>
<evidence type="ECO:0000255" key="1">
    <source>
        <dbReference type="HAMAP-Rule" id="MF_01328"/>
    </source>
</evidence>
<evidence type="ECO:0000256" key="2">
    <source>
        <dbReference type="SAM" id="MobiDB-lite"/>
    </source>
</evidence>
<evidence type="ECO:0000305" key="3"/>
<dbReference type="EMBL" id="CP000644">
    <property type="protein sequence ID" value="ABO92027.1"/>
    <property type="molecule type" value="Genomic_DNA"/>
</dbReference>
<dbReference type="RefSeq" id="WP_005319750.1">
    <property type="nucleotide sequence ID" value="NC_009348.1"/>
</dbReference>
<dbReference type="SMR" id="A4ST05"/>
<dbReference type="STRING" id="29491.GCA_000820065_03466"/>
<dbReference type="GeneID" id="79877767"/>
<dbReference type="KEGG" id="asa:ASA_4086"/>
<dbReference type="eggNOG" id="COG0088">
    <property type="taxonomic scope" value="Bacteria"/>
</dbReference>
<dbReference type="HOGENOM" id="CLU_041575_5_2_6"/>
<dbReference type="Proteomes" id="UP000000225">
    <property type="component" value="Chromosome"/>
</dbReference>
<dbReference type="GO" id="GO:1990904">
    <property type="term" value="C:ribonucleoprotein complex"/>
    <property type="evidence" value="ECO:0007669"/>
    <property type="project" value="UniProtKB-KW"/>
</dbReference>
<dbReference type="GO" id="GO:0005840">
    <property type="term" value="C:ribosome"/>
    <property type="evidence" value="ECO:0007669"/>
    <property type="project" value="UniProtKB-KW"/>
</dbReference>
<dbReference type="GO" id="GO:0019843">
    <property type="term" value="F:rRNA binding"/>
    <property type="evidence" value="ECO:0007669"/>
    <property type="project" value="UniProtKB-UniRule"/>
</dbReference>
<dbReference type="GO" id="GO:0003735">
    <property type="term" value="F:structural constituent of ribosome"/>
    <property type="evidence" value="ECO:0007669"/>
    <property type="project" value="InterPro"/>
</dbReference>
<dbReference type="GO" id="GO:0006412">
    <property type="term" value="P:translation"/>
    <property type="evidence" value="ECO:0007669"/>
    <property type="project" value="UniProtKB-UniRule"/>
</dbReference>
<dbReference type="FunFam" id="3.40.1370.10:FF:000001">
    <property type="entry name" value="50S ribosomal protein L4"/>
    <property type="match status" value="1"/>
</dbReference>
<dbReference type="Gene3D" id="3.40.1370.10">
    <property type="match status" value="1"/>
</dbReference>
<dbReference type="HAMAP" id="MF_01328_B">
    <property type="entry name" value="Ribosomal_uL4_B"/>
    <property type="match status" value="1"/>
</dbReference>
<dbReference type="InterPro" id="IPR002136">
    <property type="entry name" value="Ribosomal_uL4"/>
</dbReference>
<dbReference type="InterPro" id="IPR013005">
    <property type="entry name" value="Ribosomal_uL4-like"/>
</dbReference>
<dbReference type="InterPro" id="IPR023574">
    <property type="entry name" value="Ribosomal_uL4_dom_sf"/>
</dbReference>
<dbReference type="NCBIfam" id="TIGR03953">
    <property type="entry name" value="rplD_bact"/>
    <property type="match status" value="1"/>
</dbReference>
<dbReference type="PANTHER" id="PTHR10746">
    <property type="entry name" value="50S RIBOSOMAL PROTEIN L4"/>
    <property type="match status" value="1"/>
</dbReference>
<dbReference type="PANTHER" id="PTHR10746:SF6">
    <property type="entry name" value="LARGE RIBOSOMAL SUBUNIT PROTEIN UL4M"/>
    <property type="match status" value="1"/>
</dbReference>
<dbReference type="Pfam" id="PF00573">
    <property type="entry name" value="Ribosomal_L4"/>
    <property type="match status" value="1"/>
</dbReference>
<dbReference type="SUPFAM" id="SSF52166">
    <property type="entry name" value="Ribosomal protein L4"/>
    <property type="match status" value="1"/>
</dbReference>
<gene>
    <name evidence="1" type="primary">rplD</name>
    <name type="ordered locus">ASA_4086</name>
</gene>
<comment type="function">
    <text evidence="1">One of the primary rRNA binding proteins, this protein initially binds near the 5'-end of the 23S rRNA. It is important during the early stages of 50S assembly. It makes multiple contacts with different domains of the 23S rRNA in the assembled 50S subunit and ribosome.</text>
</comment>
<comment type="function">
    <text evidence="1">Forms part of the polypeptide exit tunnel.</text>
</comment>
<comment type="subunit">
    <text evidence="1">Part of the 50S ribosomal subunit.</text>
</comment>
<comment type="similarity">
    <text evidence="1">Belongs to the universal ribosomal protein uL4 family.</text>
</comment>
<protein>
    <recommendedName>
        <fullName evidence="1">Large ribosomal subunit protein uL4</fullName>
    </recommendedName>
    <alternativeName>
        <fullName evidence="3">50S ribosomal protein L4</fullName>
    </alternativeName>
</protein>
<accession>A4ST05</accession>
<keyword id="KW-0687">Ribonucleoprotein</keyword>
<keyword id="KW-0689">Ribosomal protein</keyword>
<keyword id="KW-0694">RNA-binding</keyword>
<keyword id="KW-0699">rRNA-binding</keyword>
<name>RL4_AERS4</name>
<organism>
    <name type="scientific">Aeromonas salmonicida (strain A449)</name>
    <dbReference type="NCBI Taxonomy" id="382245"/>
    <lineage>
        <taxon>Bacteria</taxon>
        <taxon>Pseudomonadati</taxon>
        <taxon>Pseudomonadota</taxon>
        <taxon>Gammaproteobacteria</taxon>
        <taxon>Aeromonadales</taxon>
        <taxon>Aeromonadaceae</taxon>
        <taxon>Aeromonas</taxon>
    </lineage>
</organism>
<reference key="1">
    <citation type="journal article" date="2008" name="BMC Genomics">
        <title>The genome of Aeromonas salmonicida subsp. salmonicida A449: insights into the evolution of a fish pathogen.</title>
        <authorList>
            <person name="Reith M.E."/>
            <person name="Singh R.K."/>
            <person name="Curtis B."/>
            <person name="Boyd J.M."/>
            <person name="Bouevitch A."/>
            <person name="Kimball J."/>
            <person name="Munholland J."/>
            <person name="Murphy C."/>
            <person name="Sarty D."/>
            <person name="Williams J."/>
            <person name="Nash J.H."/>
            <person name="Johnson S.C."/>
            <person name="Brown L.L."/>
        </authorList>
    </citation>
    <scope>NUCLEOTIDE SEQUENCE [LARGE SCALE GENOMIC DNA]</scope>
    <source>
        <strain>A449</strain>
    </source>
</reference>
<feature type="chain" id="PRO_1000052350" description="Large ribosomal subunit protein uL4">
    <location>
        <begin position="1"/>
        <end position="201"/>
    </location>
</feature>
<feature type="region of interest" description="Disordered" evidence="2">
    <location>
        <begin position="45"/>
        <end position="66"/>
    </location>
</feature>
<proteinExistence type="inferred from homology"/>